<dbReference type="GO" id="GO:0005576">
    <property type="term" value="C:extracellular region"/>
    <property type="evidence" value="ECO:0007669"/>
    <property type="project" value="UniProtKB-SubCell"/>
</dbReference>
<feature type="signal peptide" evidence="2">
    <location>
        <begin position="1"/>
        <end position="21"/>
    </location>
</feature>
<feature type="propeptide" id="PRO_0000452230" evidence="1">
    <location>
        <begin position="22"/>
        <end position="27"/>
    </location>
</feature>
<feature type="peptide" id="PRO_0000452231" description="Peptide HSTX-IX" evidence="1">
    <location>
        <begin position="25"/>
        <end position="46"/>
    </location>
</feature>
<feature type="modified residue" description="Isoleucine amide" evidence="1">
    <location>
        <position position="46"/>
    </location>
</feature>
<feature type="disulfide bond" evidence="1">
    <location>
        <begin position="26"/>
        <end position="38"/>
    </location>
</feature>
<organism>
    <name type="scientific">Haemadipsa sylvestris</name>
    <name type="common">Indian leech</name>
    <dbReference type="NCBI Taxonomy" id="13555"/>
    <lineage>
        <taxon>Eukaryota</taxon>
        <taxon>Metazoa</taxon>
        <taxon>Spiralia</taxon>
        <taxon>Lophotrochozoa</taxon>
        <taxon>Annelida</taxon>
        <taxon>Clitellata</taxon>
        <taxon>Hirudinea</taxon>
        <taxon>Hirudinida</taxon>
        <taxon>Hirudiniformes</taxon>
        <taxon>Haemadipsidae</taxon>
        <taxon>Haemadipsa</taxon>
    </lineage>
</organism>
<sequence length="47" mass="4909">MKTLLVFLLLAILVAVLIGNSQVEACNDNAQCGPLGACIMGYFLPIG</sequence>
<reference key="1">
    <citation type="journal article" date="2018" name="Front. Pharmacol.">
        <title>Novel sodium channel inhibitor from leeches.</title>
        <authorList>
            <person name="Wang G."/>
            <person name="Long C."/>
            <person name="Liu W."/>
            <person name="Xu C."/>
            <person name="Zhang M."/>
            <person name="Li Q."/>
            <person name="Lu Q."/>
            <person name="Meng P."/>
            <person name="Li D."/>
            <person name="Rong M."/>
            <person name="Sun Z."/>
            <person name="Luo X."/>
            <person name="Lai R."/>
        </authorList>
    </citation>
    <scope>NUCLEOTIDE SEQUENCE [MRNA]</scope>
    <source>
        <tissue>Salivary gland</tissue>
    </source>
</reference>
<name>HSTX9_HAESL</name>
<accession>P0DUH2</accession>
<evidence type="ECO:0000250" key="1">
    <source>
        <dbReference type="UniProtKB" id="A0A2L1DGG0"/>
    </source>
</evidence>
<evidence type="ECO:0000255" key="2"/>
<evidence type="ECO:0000303" key="3">
    <source>
    </source>
</evidence>
<evidence type="ECO:0000305" key="4"/>
<proteinExistence type="inferred from homology"/>
<comment type="function">
    <text evidence="1">Leech salivary gland peptide with unknown function.</text>
</comment>
<comment type="subcellular location">
    <subcellularLocation>
        <location evidence="1">Secreted</location>
    </subcellularLocation>
</comment>
<comment type="tissue specificity">
    <text evidence="1">Expressed in salivary glands. Highly expressed in the head, body and tail with a 2-3-fold higher expression in the head.</text>
</comment>
<comment type="miscellaneous">
    <text evidence="1">Does not show effect on voltage-gated calcium channels, potassium channels, and tetrodotoxin-sensitive sodium channels. Does not show activity on Nav1.7/SCN9A, and shows very weak activity on cation channel TRPA1.</text>
</comment>
<comment type="similarity">
    <text evidence="4">Belongs to the annelide toxin family.</text>
</comment>
<keyword id="KW-0027">Amidation</keyword>
<keyword id="KW-1015">Disulfide bond</keyword>
<keyword id="KW-0964">Secreted</keyword>
<keyword id="KW-0732">Signal</keyword>
<protein>
    <recommendedName>
        <fullName evidence="3">Peptide HSTX-IX</fullName>
    </recommendedName>
</protein>